<name>RLMN_DESAP</name>
<protein>
    <recommendedName>
        <fullName evidence="1">Probable dual-specificity RNA methyltransferase RlmN</fullName>
        <ecNumber evidence="1">2.1.1.192</ecNumber>
    </recommendedName>
    <alternativeName>
        <fullName evidence="1">23S rRNA (adenine(2503)-C(2))-methyltransferase</fullName>
    </alternativeName>
    <alternativeName>
        <fullName evidence="1">23S rRNA m2A2503 methyltransferase</fullName>
    </alternativeName>
    <alternativeName>
        <fullName evidence="1">Ribosomal RNA large subunit methyltransferase N</fullName>
    </alternativeName>
    <alternativeName>
        <fullName evidence="1">tRNA (adenine(37)-C(2))-methyltransferase</fullName>
    </alternativeName>
    <alternativeName>
        <fullName evidence="1">tRNA m2A37 methyltransferase</fullName>
    </alternativeName>
</protein>
<comment type="function">
    <text evidence="1">Specifically methylates position 2 of adenine 2503 in 23S rRNA and position 2 of adenine 37 in tRNAs.</text>
</comment>
<comment type="catalytic activity">
    <reaction evidence="1">
        <text>adenosine(2503) in 23S rRNA + 2 reduced [2Fe-2S]-[ferredoxin] + 2 S-adenosyl-L-methionine = 2-methyladenosine(2503) in 23S rRNA + 5'-deoxyadenosine + L-methionine + 2 oxidized [2Fe-2S]-[ferredoxin] + S-adenosyl-L-homocysteine</text>
        <dbReference type="Rhea" id="RHEA:42916"/>
        <dbReference type="Rhea" id="RHEA-COMP:10000"/>
        <dbReference type="Rhea" id="RHEA-COMP:10001"/>
        <dbReference type="Rhea" id="RHEA-COMP:10152"/>
        <dbReference type="Rhea" id="RHEA-COMP:10282"/>
        <dbReference type="ChEBI" id="CHEBI:17319"/>
        <dbReference type="ChEBI" id="CHEBI:33737"/>
        <dbReference type="ChEBI" id="CHEBI:33738"/>
        <dbReference type="ChEBI" id="CHEBI:57844"/>
        <dbReference type="ChEBI" id="CHEBI:57856"/>
        <dbReference type="ChEBI" id="CHEBI:59789"/>
        <dbReference type="ChEBI" id="CHEBI:74411"/>
        <dbReference type="ChEBI" id="CHEBI:74497"/>
        <dbReference type="EC" id="2.1.1.192"/>
    </reaction>
</comment>
<comment type="catalytic activity">
    <reaction evidence="1">
        <text>adenosine(37) in tRNA + 2 reduced [2Fe-2S]-[ferredoxin] + 2 S-adenosyl-L-methionine = 2-methyladenosine(37) in tRNA + 5'-deoxyadenosine + L-methionine + 2 oxidized [2Fe-2S]-[ferredoxin] + S-adenosyl-L-homocysteine</text>
        <dbReference type="Rhea" id="RHEA:43332"/>
        <dbReference type="Rhea" id="RHEA-COMP:10000"/>
        <dbReference type="Rhea" id="RHEA-COMP:10001"/>
        <dbReference type="Rhea" id="RHEA-COMP:10162"/>
        <dbReference type="Rhea" id="RHEA-COMP:10485"/>
        <dbReference type="ChEBI" id="CHEBI:17319"/>
        <dbReference type="ChEBI" id="CHEBI:33737"/>
        <dbReference type="ChEBI" id="CHEBI:33738"/>
        <dbReference type="ChEBI" id="CHEBI:57844"/>
        <dbReference type="ChEBI" id="CHEBI:57856"/>
        <dbReference type="ChEBI" id="CHEBI:59789"/>
        <dbReference type="ChEBI" id="CHEBI:74411"/>
        <dbReference type="ChEBI" id="CHEBI:74497"/>
        <dbReference type="EC" id="2.1.1.192"/>
    </reaction>
</comment>
<comment type="cofactor">
    <cofactor evidence="1">
        <name>[4Fe-4S] cluster</name>
        <dbReference type="ChEBI" id="CHEBI:49883"/>
    </cofactor>
    <text evidence="1">Binds 1 [4Fe-4S] cluster. The cluster is coordinated with 3 cysteines and an exchangeable S-adenosyl-L-methionine.</text>
</comment>
<comment type="subcellular location">
    <subcellularLocation>
        <location evidence="1">Cytoplasm</location>
    </subcellularLocation>
</comment>
<comment type="miscellaneous">
    <text evidence="1">Reaction proceeds by a ping-pong mechanism involving intermediate methylation of a conserved cysteine residue.</text>
</comment>
<comment type="similarity">
    <text evidence="1">Belongs to the radical SAM superfamily. RlmN family.</text>
</comment>
<feature type="chain" id="PRO_0000350151" description="Probable dual-specificity RNA methyltransferase RlmN">
    <location>
        <begin position="1"/>
        <end position="318"/>
    </location>
</feature>
<feature type="domain" description="Radical SAM core" evidence="2">
    <location>
        <begin position="69"/>
        <end position="299"/>
    </location>
</feature>
<feature type="active site" description="Proton acceptor" evidence="1">
    <location>
        <position position="63"/>
    </location>
</feature>
<feature type="active site" description="S-methylcysteine intermediate" evidence="1">
    <location>
        <position position="304"/>
    </location>
</feature>
<feature type="binding site" evidence="1">
    <location>
        <position position="83"/>
    </location>
    <ligand>
        <name>[4Fe-4S] cluster</name>
        <dbReference type="ChEBI" id="CHEBI:49883"/>
        <note>4Fe-4S-S-AdoMet</note>
    </ligand>
</feature>
<feature type="binding site" evidence="1">
    <location>
        <position position="87"/>
    </location>
    <ligand>
        <name>[4Fe-4S] cluster</name>
        <dbReference type="ChEBI" id="CHEBI:49883"/>
        <note>4Fe-4S-S-AdoMet</note>
    </ligand>
</feature>
<feature type="binding site" evidence="1">
    <location>
        <position position="90"/>
    </location>
    <ligand>
        <name>[4Fe-4S] cluster</name>
        <dbReference type="ChEBI" id="CHEBI:49883"/>
        <note>4Fe-4S-S-AdoMet</note>
    </ligand>
</feature>
<feature type="binding site" evidence="1">
    <location>
        <begin position="130"/>
        <end position="131"/>
    </location>
    <ligand>
        <name>S-adenosyl-L-methionine</name>
        <dbReference type="ChEBI" id="CHEBI:59789"/>
    </ligand>
</feature>
<feature type="binding site" evidence="1">
    <location>
        <position position="162"/>
    </location>
    <ligand>
        <name>S-adenosyl-L-methionine</name>
        <dbReference type="ChEBI" id="CHEBI:59789"/>
    </ligand>
</feature>
<feature type="binding site" evidence="1">
    <location>
        <begin position="185"/>
        <end position="187"/>
    </location>
    <ligand>
        <name>S-adenosyl-L-methionine</name>
        <dbReference type="ChEBI" id="CHEBI:59789"/>
    </ligand>
</feature>
<feature type="binding site" evidence="1">
    <location>
        <position position="261"/>
    </location>
    <ligand>
        <name>S-adenosyl-L-methionine</name>
        <dbReference type="ChEBI" id="CHEBI:59789"/>
    </ligand>
</feature>
<feature type="disulfide bond" description="(transient)" evidence="1">
    <location>
        <begin position="76"/>
        <end position="304"/>
    </location>
</feature>
<keyword id="KW-0004">4Fe-4S</keyword>
<keyword id="KW-0963">Cytoplasm</keyword>
<keyword id="KW-1015">Disulfide bond</keyword>
<keyword id="KW-0408">Iron</keyword>
<keyword id="KW-0411">Iron-sulfur</keyword>
<keyword id="KW-0479">Metal-binding</keyword>
<keyword id="KW-0489">Methyltransferase</keyword>
<keyword id="KW-1185">Reference proteome</keyword>
<keyword id="KW-0698">rRNA processing</keyword>
<keyword id="KW-0949">S-adenosyl-L-methionine</keyword>
<keyword id="KW-0808">Transferase</keyword>
<keyword id="KW-0819">tRNA processing</keyword>
<organism>
    <name type="scientific">Desulforudis audaxviator (strain MP104C)</name>
    <dbReference type="NCBI Taxonomy" id="477974"/>
    <lineage>
        <taxon>Bacteria</taxon>
        <taxon>Bacillati</taxon>
        <taxon>Bacillota</taxon>
        <taxon>Clostridia</taxon>
        <taxon>Thermoanaerobacterales</taxon>
        <taxon>Candidatus Desulforudaceae</taxon>
        <taxon>Candidatus Desulforudis</taxon>
    </lineage>
</organism>
<sequence length="318" mass="34851">MAEWVFKQGALSLAEMTNLPAGFRKRLAGEAVVGRLEVLDSRVSAAGDTVKYLLGLDDGHAVETVLMRHDYGRTVCVSSQVGCRMACRFCASALGGWIRNLRSGELYEQVLAVRRASGEPVTHVVLMGMGEPLDNYENTLKFVANVTAPYGLRLSQRRITLSTCGLVPEIQKLARERLALTLAISLHAPNNALRDTLVPVNRKYPLEQLIPACAEYARRTGRRVSFEYILLGGVNDSPELARELSDLLTGLLGHVNLIPANPVPESGYRAPSPEAVRTFRRVLEEGGVPVSLRRELGADIGAACGQLRRRHRTKAVEE</sequence>
<reference key="1">
    <citation type="submission" date="2007-10" db="EMBL/GenBank/DDBJ databases">
        <title>Complete sequence of chromosome of Desulforudis audaxviator MP104C.</title>
        <authorList>
            <person name="Copeland A."/>
            <person name="Lucas S."/>
            <person name="Lapidus A."/>
            <person name="Barry K."/>
            <person name="Glavina del Rio T."/>
            <person name="Dalin E."/>
            <person name="Tice H."/>
            <person name="Bruce D."/>
            <person name="Pitluck S."/>
            <person name="Lowry S.R."/>
            <person name="Larimer F."/>
            <person name="Land M.L."/>
            <person name="Hauser L."/>
            <person name="Kyrpides N."/>
            <person name="Ivanova N.N."/>
            <person name="Richardson P."/>
        </authorList>
    </citation>
    <scope>NUCLEOTIDE SEQUENCE [LARGE SCALE GENOMIC DNA]</scope>
    <source>
        <strain>MP104C</strain>
    </source>
</reference>
<accession>B1I501</accession>
<dbReference type="EC" id="2.1.1.192" evidence="1"/>
<dbReference type="EMBL" id="CP000860">
    <property type="protein sequence ID" value="ACA60092.1"/>
    <property type="molecule type" value="Genomic_DNA"/>
</dbReference>
<dbReference type="SMR" id="B1I501"/>
<dbReference type="STRING" id="477974.Daud_1590"/>
<dbReference type="KEGG" id="dau:Daud_1590"/>
<dbReference type="eggNOG" id="COG0820">
    <property type="taxonomic scope" value="Bacteria"/>
</dbReference>
<dbReference type="HOGENOM" id="CLU_029101_3_1_9"/>
<dbReference type="Proteomes" id="UP000008544">
    <property type="component" value="Chromosome"/>
</dbReference>
<dbReference type="GO" id="GO:0005737">
    <property type="term" value="C:cytoplasm"/>
    <property type="evidence" value="ECO:0007669"/>
    <property type="project" value="UniProtKB-SubCell"/>
</dbReference>
<dbReference type="GO" id="GO:0051539">
    <property type="term" value="F:4 iron, 4 sulfur cluster binding"/>
    <property type="evidence" value="ECO:0007669"/>
    <property type="project" value="UniProtKB-UniRule"/>
</dbReference>
<dbReference type="GO" id="GO:0046872">
    <property type="term" value="F:metal ion binding"/>
    <property type="evidence" value="ECO:0007669"/>
    <property type="project" value="UniProtKB-KW"/>
</dbReference>
<dbReference type="GO" id="GO:0070040">
    <property type="term" value="F:rRNA (adenine(2503)-C2-)-methyltransferase activity"/>
    <property type="evidence" value="ECO:0007669"/>
    <property type="project" value="UniProtKB-UniRule"/>
</dbReference>
<dbReference type="GO" id="GO:0019843">
    <property type="term" value="F:rRNA binding"/>
    <property type="evidence" value="ECO:0007669"/>
    <property type="project" value="UniProtKB-UniRule"/>
</dbReference>
<dbReference type="GO" id="GO:0002935">
    <property type="term" value="F:tRNA (adenine(37)-C2)-methyltransferase activity"/>
    <property type="evidence" value="ECO:0007669"/>
    <property type="project" value="UniProtKB-UniRule"/>
</dbReference>
<dbReference type="GO" id="GO:0000049">
    <property type="term" value="F:tRNA binding"/>
    <property type="evidence" value="ECO:0007669"/>
    <property type="project" value="UniProtKB-UniRule"/>
</dbReference>
<dbReference type="GO" id="GO:0070475">
    <property type="term" value="P:rRNA base methylation"/>
    <property type="evidence" value="ECO:0007669"/>
    <property type="project" value="UniProtKB-UniRule"/>
</dbReference>
<dbReference type="GO" id="GO:0030488">
    <property type="term" value="P:tRNA methylation"/>
    <property type="evidence" value="ECO:0007669"/>
    <property type="project" value="UniProtKB-UniRule"/>
</dbReference>
<dbReference type="CDD" id="cd01335">
    <property type="entry name" value="Radical_SAM"/>
    <property type="match status" value="1"/>
</dbReference>
<dbReference type="FunFam" id="3.20.20.70:FF:000014">
    <property type="entry name" value="Probable dual-specificity RNA methyltransferase RlmN"/>
    <property type="match status" value="1"/>
</dbReference>
<dbReference type="Gene3D" id="1.10.150.530">
    <property type="match status" value="1"/>
</dbReference>
<dbReference type="Gene3D" id="3.20.20.70">
    <property type="entry name" value="Aldolase class I"/>
    <property type="match status" value="1"/>
</dbReference>
<dbReference type="HAMAP" id="MF_01849">
    <property type="entry name" value="RNA_methyltr_RlmN"/>
    <property type="match status" value="1"/>
</dbReference>
<dbReference type="InterPro" id="IPR013785">
    <property type="entry name" value="Aldolase_TIM"/>
</dbReference>
<dbReference type="InterPro" id="IPR040072">
    <property type="entry name" value="Methyltransferase_A"/>
</dbReference>
<dbReference type="InterPro" id="IPR027492">
    <property type="entry name" value="RNA_MTrfase_RlmN"/>
</dbReference>
<dbReference type="InterPro" id="IPR004383">
    <property type="entry name" value="rRNA_lsu_MTrfase_RlmN/Cfr"/>
</dbReference>
<dbReference type="InterPro" id="IPR007197">
    <property type="entry name" value="rSAM"/>
</dbReference>
<dbReference type="NCBIfam" id="TIGR00048">
    <property type="entry name" value="rRNA_mod_RlmN"/>
    <property type="match status" value="1"/>
</dbReference>
<dbReference type="PANTHER" id="PTHR30544">
    <property type="entry name" value="23S RRNA METHYLTRANSFERASE"/>
    <property type="match status" value="1"/>
</dbReference>
<dbReference type="PANTHER" id="PTHR30544:SF5">
    <property type="entry name" value="RADICAL SAM CORE DOMAIN-CONTAINING PROTEIN"/>
    <property type="match status" value="1"/>
</dbReference>
<dbReference type="Pfam" id="PF04055">
    <property type="entry name" value="Radical_SAM"/>
    <property type="match status" value="1"/>
</dbReference>
<dbReference type="PIRSF" id="PIRSF006004">
    <property type="entry name" value="CHP00048"/>
    <property type="match status" value="1"/>
</dbReference>
<dbReference type="SFLD" id="SFLDF00275">
    <property type="entry name" value="adenosine_C2_methyltransferase"/>
    <property type="match status" value="1"/>
</dbReference>
<dbReference type="SFLD" id="SFLDS00029">
    <property type="entry name" value="Radical_SAM"/>
    <property type="match status" value="1"/>
</dbReference>
<dbReference type="SUPFAM" id="SSF102114">
    <property type="entry name" value="Radical SAM enzymes"/>
    <property type="match status" value="1"/>
</dbReference>
<dbReference type="PROSITE" id="PS51918">
    <property type="entry name" value="RADICAL_SAM"/>
    <property type="match status" value="1"/>
</dbReference>
<gene>
    <name evidence="1" type="primary">rlmN</name>
    <name type="ordered locus">Daud_1590</name>
</gene>
<proteinExistence type="inferred from homology"/>
<evidence type="ECO:0000255" key="1">
    <source>
        <dbReference type="HAMAP-Rule" id="MF_01849"/>
    </source>
</evidence>
<evidence type="ECO:0000255" key="2">
    <source>
        <dbReference type="PROSITE-ProRule" id="PRU01266"/>
    </source>
</evidence>